<evidence type="ECO:0000255" key="1">
    <source>
        <dbReference type="HAMAP-Rule" id="MF_00161"/>
    </source>
</evidence>
<dbReference type="EC" id="3.4.23.36" evidence="1"/>
<dbReference type="EMBL" id="AP009389">
    <property type="protein sequence ID" value="BAF60000.1"/>
    <property type="molecule type" value="Genomic_DNA"/>
</dbReference>
<dbReference type="SMR" id="A5D178"/>
<dbReference type="STRING" id="370438.PTH_1819"/>
<dbReference type="KEGG" id="pth:PTH_1819"/>
<dbReference type="eggNOG" id="COG0597">
    <property type="taxonomic scope" value="Bacteria"/>
</dbReference>
<dbReference type="HOGENOM" id="CLU_083252_3_4_9"/>
<dbReference type="UniPathway" id="UPA00665"/>
<dbReference type="Proteomes" id="UP000006556">
    <property type="component" value="Chromosome"/>
</dbReference>
<dbReference type="GO" id="GO:0005886">
    <property type="term" value="C:plasma membrane"/>
    <property type="evidence" value="ECO:0007669"/>
    <property type="project" value="UniProtKB-SubCell"/>
</dbReference>
<dbReference type="GO" id="GO:0004190">
    <property type="term" value="F:aspartic-type endopeptidase activity"/>
    <property type="evidence" value="ECO:0007669"/>
    <property type="project" value="UniProtKB-UniRule"/>
</dbReference>
<dbReference type="GO" id="GO:0006508">
    <property type="term" value="P:proteolysis"/>
    <property type="evidence" value="ECO:0007669"/>
    <property type="project" value="UniProtKB-KW"/>
</dbReference>
<dbReference type="HAMAP" id="MF_00161">
    <property type="entry name" value="LspA"/>
    <property type="match status" value="1"/>
</dbReference>
<dbReference type="InterPro" id="IPR001872">
    <property type="entry name" value="Peptidase_A8"/>
</dbReference>
<dbReference type="NCBIfam" id="TIGR00077">
    <property type="entry name" value="lspA"/>
    <property type="match status" value="1"/>
</dbReference>
<dbReference type="PANTHER" id="PTHR33695">
    <property type="entry name" value="LIPOPROTEIN SIGNAL PEPTIDASE"/>
    <property type="match status" value="1"/>
</dbReference>
<dbReference type="PANTHER" id="PTHR33695:SF1">
    <property type="entry name" value="LIPOPROTEIN SIGNAL PEPTIDASE"/>
    <property type="match status" value="1"/>
</dbReference>
<dbReference type="Pfam" id="PF01252">
    <property type="entry name" value="Peptidase_A8"/>
    <property type="match status" value="1"/>
</dbReference>
<dbReference type="PRINTS" id="PR00781">
    <property type="entry name" value="LIPOSIGPTASE"/>
</dbReference>
<reference key="1">
    <citation type="journal article" date="2008" name="Genome Res.">
        <title>The genome of Pelotomaculum thermopropionicum reveals niche-associated evolution in anaerobic microbiota.</title>
        <authorList>
            <person name="Kosaka T."/>
            <person name="Kato S."/>
            <person name="Shimoyama T."/>
            <person name="Ishii S."/>
            <person name="Abe T."/>
            <person name="Watanabe K."/>
        </authorList>
    </citation>
    <scope>NUCLEOTIDE SEQUENCE [LARGE SCALE GENOMIC DNA]</scope>
    <source>
        <strain>DSM 13744 / JCM 10971 / SI</strain>
    </source>
</reference>
<comment type="function">
    <text evidence="1">This protein specifically catalyzes the removal of signal peptides from prolipoproteins.</text>
</comment>
<comment type="catalytic activity">
    <reaction evidence="1">
        <text>Release of signal peptides from bacterial membrane prolipoproteins. Hydrolyzes -Xaa-Yaa-Zaa-|-(S,diacylglyceryl)Cys-, in which Xaa is hydrophobic (preferably Leu), and Yaa (Ala or Ser) and Zaa (Gly or Ala) have small, neutral side chains.</text>
        <dbReference type="EC" id="3.4.23.36"/>
    </reaction>
</comment>
<comment type="pathway">
    <text evidence="1">Protein modification; lipoprotein biosynthesis (signal peptide cleavage).</text>
</comment>
<comment type="subcellular location">
    <subcellularLocation>
        <location evidence="1">Cell membrane</location>
        <topology evidence="1">Multi-pass membrane protein</topology>
    </subcellularLocation>
</comment>
<comment type="similarity">
    <text evidence="1">Belongs to the peptidase A8 family.</text>
</comment>
<feature type="chain" id="PRO_1000076927" description="Lipoprotein signal peptidase">
    <location>
        <begin position="1"/>
        <end position="152"/>
    </location>
</feature>
<feature type="transmembrane region" description="Helical" evidence="1">
    <location>
        <begin position="33"/>
        <end position="53"/>
    </location>
</feature>
<feature type="transmembrane region" description="Helical" evidence="1">
    <location>
        <begin position="58"/>
        <end position="78"/>
    </location>
</feature>
<feature type="transmembrane region" description="Helical" evidence="1">
    <location>
        <begin position="83"/>
        <end position="102"/>
    </location>
</feature>
<feature type="transmembrane region" description="Helical" evidence="1">
    <location>
        <begin position="120"/>
        <end position="140"/>
    </location>
</feature>
<feature type="active site" evidence="1">
    <location>
        <position position="111"/>
    </location>
</feature>
<feature type="active site" evidence="1">
    <location>
        <position position="125"/>
    </location>
</feature>
<accession>A5D178</accession>
<protein>
    <recommendedName>
        <fullName evidence="1">Lipoprotein signal peptidase</fullName>
        <ecNumber evidence="1">3.4.23.36</ecNumber>
    </recommendedName>
    <alternativeName>
        <fullName evidence="1">Prolipoprotein signal peptidase</fullName>
    </alternativeName>
    <alternativeName>
        <fullName evidence="1">Signal peptidase II</fullName>
        <shortName evidence="1">SPase II</shortName>
    </alternativeName>
</protein>
<gene>
    <name evidence="1" type="primary">lspA</name>
    <name type="ordered locus">PTH_1819</name>
</gene>
<organism>
    <name type="scientific">Pelotomaculum thermopropionicum (strain DSM 13744 / JCM 10971 / SI)</name>
    <dbReference type="NCBI Taxonomy" id="370438"/>
    <lineage>
        <taxon>Bacteria</taxon>
        <taxon>Bacillati</taxon>
        <taxon>Bacillota</taxon>
        <taxon>Clostridia</taxon>
        <taxon>Eubacteriales</taxon>
        <taxon>Desulfotomaculaceae</taxon>
        <taxon>Pelotomaculum</taxon>
    </lineage>
</organism>
<proteinExistence type="inferred from homology"/>
<keyword id="KW-0064">Aspartyl protease</keyword>
<keyword id="KW-1003">Cell membrane</keyword>
<keyword id="KW-0378">Hydrolase</keyword>
<keyword id="KW-0472">Membrane</keyword>
<keyword id="KW-0645">Protease</keyword>
<keyword id="KW-1185">Reference proteome</keyword>
<keyword id="KW-0812">Transmembrane</keyword>
<keyword id="KW-1133">Transmembrane helix</keyword>
<sequence length="152" mass="16658">MFLFIIIAVVLLVDQATKAAVQMLMCQGESIPVVPPAFYLTYIMNPGAAFGLLPHKKMLFVTVTVIIIAGVLVGYFKIRPRKPVLDYGLGLVAGGALGNLADRLRYGLVVDFLDFRIWPVFNLADTAIVTGAFLLAWALLNDSDKSSKKERK</sequence>
<name>LSPA_PELTS</name>